<sequence length="436" mass="49350">MASWIFKLLLLLQCVLVLIQHADSSSIIRYLPGFEGPLPFELETGYIGVGQKEEDQLFYYFIKSENNPEEDPLLVWLTGGPGCSSFSGLVYENGPLAFKVETYNGSVPTLVSTTYSWTKVANIIYLDQPVGTGFSYSRNPFADIPSDTGSVKRVNEFVRKWLAKHPEYFSNPFYVTGNSYSGKVIPAIVQEISNGNYICCKPQINLQGYVIGNPVAYYDHDKDFRIPFAHGVALISDELFESLKASCGGSYSVVDPLNTECLKLIEDYDKCVSGIYEELILKSKCEHTSPDCYTYRYLLSEYWADNETVRRALKVVKGSKGTWERCDYRVLSNQDIKSSIPFHINNSIRGYRSLVISGDHDMTIPFLGTQAWIRSLNYSITEKWRPWMILDQVAGYTKTYANKMTLATVKGGGHTLEYKPEENSVLFKRWISGQPL</sequence>
<evidence type="ECO:0000250" key="1"/>
<evidence type="ECO:0000255" key="2"/>
<evidence type="ECO:0000269" key="3">
    <source>
    </source>
</evidence>
<evidence type="ECO:0000305" key="4"/>
<gene>
    <name type="primary">SCPL15</name>
    <name type="ordered locus">At3g12240</name>
    <name type="ORF">F28J15.111</name>
    <name type="ORF">F28J15.13</name>
</gene>
<proteinExistence type="evidence at transcript level"/>
<accession>Q9C7D2</accession>
<accession>Q9LHI2</accession>
<organism>
    <name type="scientific">Arabidopsis thaliana</name>
    <name type="common">Mouse-ear cress</name>
    <dbReference type="NCBI Taxonomy" id="3702"/>
    <lineage>
        <taxon>Eukaryota</taxon>
        <taxon>Viridiplantae</taxon>
        <taxon>Streptophyta</taxon>
        <taxon>Embryophyta</taxon>
        <taxon>Tracheophyta</taxon>
        <taxon>Spermatophyta</taxon>
        <taxon>Magnoliopsida</taxon>
        <taxon>eudicotyledons</taxon>
        <taxon>Gunneridae</taxon>
        <taxon>Pentapetalae</taxon>
        <taxon>rosids</taxon>
        <taxon>malvids</taxon>
        <taxon>Brassicales</taxon>
        <taxon>Brassicaceae</taxon>
        <taxon>Camelineae</taxon>
        <taxon>Arabidopsis</taxon>
    </lineage>
</organism>
<reference key="1">
    <citation type="journal article" date="2000" name="Nature">
        <title>Sequence and analysis of chromosome 3 of the plant Arabidopsis thaliana.</title>
        <authorList>
            <person name="Salanoubat M."/>
            <person name="Lemcke K."/>
            <person name="Rieger M."/>
            <person name="Ansorge W."/>
            <person name="Unseld M."/>
            <person name="Fartmann B."/>
            <person name="Valle G."/>
            <person name="Bloecker H."/>
            <person name="Perez-Alonso M."/>
            <person name="Obermaier B."/>
            <person name="Delseny M."/>
            <person name="Boutry M."/>
            <person name="Grivell L.A."/>
            <person name="Mache R."/>
            <person name="Puigdomenech P."/>
            <person name="De Simone V."/>
            <person name="Choisne N."/>
            <person name="Artiguenave F."/>
            <person name="Robert C."/>
            <person name="Brottier P."/>
            <person name="Wincker P."/>
            <person name="Cattolico L."/>
            <person name="Weissenbach J."/>
            <person name="Saurin W."/>
            <person name="Quetier F."/>
            <person name="Schaefer M."/>
            <person name="Mueller-Auer S."/>
            <person name="Gabel C."/>
            <person name="Fuchs M."/>
            <person name="Benes V."/>
            <person name="Wurmbach E."/>
            <person name="Drzonek H."/>
            <person name="Erfle H."/>
            <person name="Jordan N."/>
            <person name="Bangert S."/>
            <person name="Wiedelmann R."/>
            <person name="Kranz H."/>
            <person name="Voss H."/>
            <person name="Holland R."/>
            <person name="Brandt P."/>
            <person name="Nyakatura G."/>
            <person name="Vezzi A."/>
            <person name="D'Angelo M."/>
            <person name="Pallavicini A."/>
            <person name="Toppo S."/>
            <person name="Simionati B."/>
            <person name="Conrad A."/>
            <person name="Hornischer K."/>
            <person name="Kauer G."/>
            <person name="Loehnert T.-H."/>
            <person name="Nordsiek G."/>
            <person name="Reichelt J."/>
            <person name="Scharfe M."/>
            <person name="Schoen O."/>
            <person name="Bargues M."/>
            <person name="Terol J."/>
            <person name="Climent J."/>
            <person name="Navarro P."/>
            <person name="Collado C."/>
            <person name="Perez-Perez A."/>
            <person name="Ottenwaelder B."/>
            <person name="Duchemin D."/>
            <person name="Cooke R."/>
            <person name="Laudie M."/>
            <person name="Berger-Llauro C."/>
            <person name="Purnelle B."/>
            <person name="Masuy D."/>
            <person name="de Haan M."/>
            <person name="Maarse A.C."/>
            <person name="Alcaraz J.-P."/>
            <person name="Cottet A."/>
            <person name="Casacuberta E."/>
            <person name="Monfort A."/>
            <person name="Argiriou A."/>
            <person name="Flores M."/>
            <person name="Liguori R."/>
            <person name="Vitale D."/>
            <person name="Mannhaupt G."/>
            <person name="Haase D."/>
            <person name="Schoof H."/>
            <person name="Rudd S."/>
            <person name="Zaccaria P."/>
            <person name="Mewes H.-W."/>
            <person name="Mayer K.F.X."/>
            <person name="Kaul S."/>
            <person name="Town C.D."/>
            <person name="Koo H.L."/>
            <person name="Tallon L.J."/>
            <person name="Jenkins J."/>
            <person name="Rooney T."/>
            <person name="Rizzo M."/>
            <person name="Walts A."/>
            <person name="Utterback T."/>
            <person name="Fujii C.Y."/>
            <person name="Shea T.P."/>
            <person name="Creasy T.H."/>
            <person name="Haas B."/>
            <person name="Maiti R."/>
            <person name="Wu D."/>
            <person name="Peterson J."/>
            <person name="Van Aken S."/>
            <person name="Pai G."/>
            <person name="Militscher J."/>
            <person name="Sellers P."/>
            <person name="Gill J.E."/>
            <person name="Feldblyum T.V."/>
            <person name="Preuss D."/>
            <person name="Lin X."/>
            <person name="Nierman W.C."/>
            <person name="Salzberg S.L."/>
            <person name="White O."/>
            <person name="Venter J.C."/>
            <person name="Fraser C.M."/>
            <person name="Kaneko T."/>
            <person name="Nakamura Y."/>
            <person name="Sato S."/>
            <person name="Kato T."/>
            <person name="Asamizu E."/>
            <person name="Sasamoto S."/>
            <person name="Kimura T."/>
            <person name="Idesawa K."/>
            <person name="Kawashima K."/>
            <person name="Kishida Y."/>
            <person name="Kiyokawa C."/>
            <person name="Kohara M."/>
            <person name="Matsumoto M."/>
            <person name="Matsuno A."/>
            <person name="Muraki A."/>
            <person name="Nakayama S."/>
            <person name="Nakazaki N."/>
            <person name="Shinpo S."/>
            <person name="Takeuchi C."/>
            <person name="Wada T."/>
            <person name="Watanabe A."/>
            <person name="Yamada M."/>
            <person name="Yasuda M."/>
            <person name="Tabata S."/>
        </authorList>
    </citation>
    <scope>NUCLEOTIDE SEQUENCE [LARGE SCALE GENOMIC DNA]</scope>
    <source>
        <strain>cv. Columbia</strain>
    </source>
</reference>
<reference key="2">
    <citation type="journal article" date="2000" name="DNA Res.">
        <title>Structural analysis of Arabidopsis thaliana chromosome 3. II. Sequence features of the 4,251,695 bp regions covered by 90 P1, TAC and BAC clones.</title>
        <authorList>
            <person name="Kaneko T."/>
            <person name="Katoh T."/>
            <person name="Sato S."/>
            <person name="Nakamura Y."/>
            <person name="Asamizu E."/>
            <person name="Tabata S."/>
        </authorList>
    </citation>
    <scope>NUCLEOTIDE SEQUENCE [LARGE SCALE GENOMIC DNA]</scope>
    <source>
        <strain>cv. Columbia</strain>
    </source>
</reference>
<reference key="3">
    <citation type="journal article" date="2017" name="Plant J.">
        <title>Araport11: a complete reannotation of the Arabidopsis thaliana reference genome.</title>
        <authorList>
            <person name="Cheng C.Y."/>
            <person name="Krishnakumar V."/>
            <person name="Chan A.P."/>
            <person name="Thibaud-Nissen F."/>
            <person name="Schobel S."/>
            <person name="Town C.D."/>
        </authorList>
    </citation>
    <scope>GENOME REANNOTATION</scope>
    <source>
        <strain>cv. Columbia</strain>
    </source>
</reference>
<reference key="4">
    <citation type="journal article" date="2005" name="Plant Physiol.">
        <title>An expression and bioinformatics analysis of the Arabidopsis serine carboxypeptidase-like gene family.</title>
        <authorList>
            <person name="Fraser C.M."/>
            <person name="Rider L.W."/>
            <person name="Chapple C."/>
        </authorList>
    </citation>
    <scope>GENE FAMILY</scope>
    <scope>TISSUE SPECIFICITY</scope>
    <scope>NOMENCLATURE</scope>
</reference>
<protein>
    <recommendedName>
        <fullName>Serine carboxypeptidase-like 15</fullName>
        <ecNumber>3.4.16.-</ecNumber>
    </recommendedName>
</protein>
<name>SCP15_ARATH</name>
<comment type="function">
    <text evidence="1">Probable carboxypeptidase.</text>
</comment>
<comment type="subcellular location">
    <subcellularLocation>
        <location evidence="4">Secreted</location>
    </subcellularLocation>
</comment>
<comment type="tissue specificity">
    <text evidence="3">Expressed in seedlings and roots.</text>
</comment>
<comment type="similarity">
    <text evidence="4">Belongs to the peptidase S10 family.</text>
</comment>
<comment type="sequence caution" evidence="4">
    <conflict type="erroneous gene model prediction">
        <sequence resource="EMBL-CDS" id="AAG51076"/>
    </conflict>
</comment>
<dbReference type="EC" id="3.4.16.-"/>
<dbReference type="EMBL" id="AC069472">
    <property type="protein sequence ID" value="AAG51076.1"/>
    <property type="status" value="ALT_SEQ"/>
    <property type="molecule type" value="Genomic_DNA"/>
</dbReference>
<dbReference type="EMBL" id="AP002047">
    <property type="protein sequence ID" value="BAB03133.1"/>
    <property type="molecule type" value="Genomic_DNA"/>
</dbReference>
<dbReference type="EMBL" id="CP002686">
    <property type="protein sequence ID" value="AEE75171.1"/>
    <property type="molecule type" value="Genomic_DNA"/>
</dbReference>
<dbReference type="RefSeq" id="NP_187832.2">
    <property type="nucleotide sequence ID" value="NM_112060.3"/>
</dbReference>
<dbReference type="SMR" id="Q9C7D2"/>
<dbReference type="FunCoup" id="Q9C7D2">
    <property type="interactions" value="632"/>
</dbReference>
<dbReference type="STRING" id="3702.Q9C7D2"/>
<dbReference type="ESTHER" id="arath-SCP15">
    <property type="family name" value="Carboxypeptidase_S10"/>
</dbReference>
<dbReference type="MEROPS" id="S10.A02"/>
<dbReference type="GlyCosmos" id="Q9C7D2">
    <property type="glycosylation" value="4 sites, No reported glycans"/>
</dbReference>
<dbReference type="GlyGen" id="Q9C7D2">
    <property type="glycosylation" value="4 sites"/>
</dbReference>
<dbReference type="PaxDb" id="3702-AT3G12240.1"/>
<dbReference type="ProteomicsDB" id="232818"/>
<dbReference type="EnsemblPlants" id="AT3G12240.1">
    <property type="protein sequence ID" value="AT3G12240.1"/>
    <property type="gene ID" value="AT3G12240"/>
</dbReference>
<dbReference type="GeneID" id="820404"/>
<dbReference type="Gramene" id="AT3G12240.1">
    <property type="protein sequence ID" value="AT3G12240.1"/>
    <property type="gene ID" value="AT3G12240"/>
</dbReference>
<dbReference type="KEGG" id="ath:AT3G12240"/>
<dbReference type="Araport" id="AT3G12240"/>
<dbReference type="TAIR" id="AT3G12240">
    <property type="gene designation" value="SCPL15"/>
</dbReference>
<dbReference type="eggNOG" id="KOG1282">
    <property type="taxonomic scope" value="Eukaryota"/>
</dbReference>
<dbReference type="HOGENOM" id="CLU_008523_0_1_1"/>
<dbReference type="InParanoid" id="Q9C7D2"/>
<dbReference type="OMA" id="MASWIFK"/>
<dbReference type="OrthoDB" id="443318at2759"/>
<dbReference type="PhylomeDB" id="Q9C7D2"/>
<dbReference type="BioCyc" id="ARA:AT3G12240-MONOMER"/>
<dbReference type="PRO" id="PR:Q9C7D2"/>
<dbReference type="Proteomes" id="UP000006548">
    <property type="component" value="Chromosome 3"/>
</dbReference>
<dbReference type="ExpressionAtlas" id="Q9C7D2">
    <property type="expression patterns" value="baseline and differential"/>
</dbReference>
<dbReference type="GO" id="GO:0005576">
    <property type="term" value="C:extracellular region"/>
    <property type="evidence" value="ECO:0007669"/>
    <property type="project" value="UniProtKB-SubCell"/>
</dbReference>
<dbReference type="GO" id="GO:0004185">
    <property type="term" value="F:serine-type carboxypeptidase activity"/>
    <property type="evidence" value="ECO:0007669"/>
    <property type="project" value="InterPro"/>
</dbReference>
<dbReference type="GO" id="GO:0006508">
    <property type="term" value="P:proteolysis"/>
    <property type="evidence" value="ECO:0007669"/>
    <property type="project" value="UniProtKB-KW"/>
</dbReference>
<dbReference type="FunFam" id="3.40.50.1820:FF:000148">
    <property type="entry name" value="Serine carboxypeptidase-like 11"/>
    <property type="match status" value="1"/>
</dbReference>
<dbReference type="Gene3D" id="3.40.50.1820">
    <property type="entry name" value="alpha/beta hydrolase"/>
    <property type="match status" value="1"/>
</dbReference>
<dbReference type="InterPro" id="IPR029058">
    <property type="entry name" value="AB_hydrolase_fold"/>
</dbReference>
<dbReference type="InterPro" id="IPR001563">
    <property type="entry name" value="Peptidase_S10"/>
</dbReference>
<dbReference type="PANTHER" id="PTHR11802:SF316">
    <property type="entry name" value="SERINE CARBOXYPEPTIDASE-LIKE 14-RELATED"/>
    <property type="match status" value="1"/>
</dbReference>
<dbReference type="PANTHER" id="PTHR11802">
    <property type="entry name" value="SERINE PROTEASE FAMILY S10 SERINE CARBOXYPEPTIDASE"/>
    <property type="match status" value="1"/>
</dbReference>
<dbReference type="Pfam" id="PF00450">
    <property type="entry name" value="Peptidase_S10"/>
    <property type="match status" value="1"/>
</dbReference>
<dbReference type="PRINTS" id="PR00724">
    <property type="entry name" value="CRBOXYPTASEC"/>
</dbReference>
<dbReference type="SUPFAM" id="SSF53474">
    <property type="entry name" value="alpha/beta-Hydrolases"/>
    <property type="match status" value="1"/>
</dbReference>
<feature type="signal peptide" evidence="2">
    <location>
        <begin position="1"/>
        <end position="24"/>
    </location>
</feature>
<feature type="chain" id="PRO_0000274629" description="Serine carboxypeptidase-like 15">
    <location>
        <begin position="25"/>
        <end position="436"/>
    </location>
</feature>
<feature type="active site" evidence="1">
    <location>
        <position position="179"/>
    </location>
</feature>
<feature type="active site" evidence="1">
    <location>
        <position position="361"/>
    </location>
</feature>
<feature type="active site" evidence="1">
    <location>
        <position position="414"/>
    </location>
</feature>
<feature type="glycosylation site" description="N-linked (GlcNAc...) asparagine" evidence="2">
    <location>
        <position position="104"/>
    </location>
</feature>
<feature type="glycosylation site" description="N-linked (GlcNAc...) asparagine" evidence="2">
    <location>
        <position position="306"/>
    </location>
</feature>
<feature type="glycosylation site" description="N-linked (GlcNAc...) asparagine" evidence="2">
    <location>
        <position position="345"/>
    </location>
</feature>
<feature type="glycosylation site" description="N-linked (GlcNAc...) asparagine" evidence="2">
    <location>
        <position position="377"/>
    </location>
</feature>
<feature type="disulfide bond" evidence="1">
    <location>
        <begin position="83"/>
        <end position="326"/>
    </location>
</feature>
<feature type="disulfide bond" evidence="1">
    <location>
        <begin position="247"/>
        <end position="261"/>
    </location>
</feature>
<feature type="disulfide bond" evidence="1">
    <location>
        <begin position="285"/>
        <end position="292"/>
    </location>
</feature>
<keyword id="KW-0121">Carboxypeptidase</keyword>
<keyword id="KW-1015">Disulfide bond</keyword>
<keyword id="KW-0325">Glycoprotein</keyword>
<keyword id="KW-0378">Hydrolase</keyword>
<keyword id="KW-0645">Protease</keyword>
<keyword id="KW-1185">Reference proteome</keyword>
<keyword id="KW-0964">Secreted</keyword>
<keyword id="KW-0732">Signal</keyword>